<protein>
    <recommendedName>
        <fullName evidence="1">Hydroxyacylglutathione hydrolase</fullName>
        <ecNumber evidence="1">3.1.2.6</ecNumber>
    </recommendedName>
    <alternativeName>
        <fullName evidence="1">Glyoxalase II</fullName>
        <shortName evidence="1">Glx II</shortName>
    </alternativeName>
</protein>
<name>GLO2_NEIMA</name>
<reference key="1">
    <citation type="journal article" date="2000" name="Nature">
        <title>Complete DNA sequence of a serogroup A strain of Neisseria meningitidis Z2491.</title>
        <authorList>
            <person name="Parkhill J."/>
            <person name="Achtman M."/>
            <person name="James K.D."/>
            <person name="Bentley S.D."/>
            <person name="Churcher C.M."/>
            <person name="Klee S.R."/>
            <person name="Morelli G."/>
            <person name="Basham D."/>
            <person name="Brown D."/>
            <person name="Chillingworth T."/>
            <person name="Davies R.M."/>
            <person name="Davis P."/>
            <person name="Devlin K."/>
            <person name="Feltwell T."/>
            <person name="Hamlin N."/>
            <person name="Holroyd S."/>
            <person name="Jagels K."/>
            <person name="Leather S."/>
            <person name="Moule S."/>
            <person name="Mungall K.L."/>
            <person name="Quail M.A."/>
            <person name="Rajandream M.A."/>
            <person name="Rutherford K.M."/>
            <person name="Simmonds M."/>
            <person name="Skelton J."/>
            <person name="Whitehead S."/>
            <person name="Spratt B.G."/>
            <person name="Barrell B.G."/>
        </authorList>
    </citation>
    <scope>NUCLEOTIDE SEQUENCE [LARGE SCALE GENOMIC DNA]</scope>
    <source>
        <strain>DSM 15465 / Z2491</strain>
    </source>
</reference>
<dbReference type="EC" id="3.1.2.6" evidence="1"/>
<dbReference type="EMBL" id="AL157959">
    <property type="protein sequence ID" value="CAM07729.1"/>
    <property type="molecule type" value="Genomic_DNA"/>
</dbReference>
<dbReference type="PIR" id="F81961">
    <property type="entry name" value="F81961"/>
</dbReference>
<dbReference type="RefSeq" id="WP_002237370.1">
    <property type="nucleotide sequence ID" value="NC_003116.1"/>
</dbReference>
<dbReference type="SMR" id="A1IPQ8"/>
<dbReference type="EnsemblBacteria" id="CAM07729">
    <property type="protein sequence ID" value="CAM07729"/>
    <property type="gene ID" value="NMA0444"/>
</dbReference>
<dbReference type="KEGG" id="nma:NMA0444"/>
<dbReference type="HOGENOM" id="CLU_030571_4_1_4"/>
<dbReference type="UniPathway" id="UPA00619">
    <property type="reaction ID" value="UER00676"/>
</dbReference>
<dbReference type="Proteomes" id="UP000000626">
    <property type="component" value="Chromosome"/>
</dbReference>
<dbReference type="GO" id="GO:0004416">
    <property type="term" value="F:hydroxyacylglutathione hydrolase activity"/>
    <property type="evidence" value="ECO:0007669"/>
    <property type="project" value="UniProtKB-UniRule"/>
</dbReference>
<dbReference type="GO" id="GO:0046872">
    <property type="term" value="F:metal ion binding"/>
    <property type="evidence" value="ECO:0007669"/>
    <property type="project" value="UniProtKB-KW"/>
</dbReference>
<dbReference type="GO" id="GO:0019243">
    <property type="term" value="P:methylglyoxal catabolic process to D-lactate via S-lactoyl-glutathione"/>
    <property type="evidence" value="ECO:0007669"/>
    <property type="project" value="InterPro"/>
</dbReference>
<dbReference type="CDD" id="cd07723">
    <property type="entry name" value="hydroxyacylglutathione_hydrolase_MBL-fold"/>
    <property type="match status" value="1"/>
</dbReference>
<dbReference type="Gene3D" id="3.60.15.10">
    <property type="entry name" value="Ribonuclease Z/Hydroxyacylglutathione hydrolase-like"/>
    <property type="match status" value="1"/>
</dbReference>
<dbReference type="HAMAP" id="MF_01374">
    <property type="entry name" value="Glyoxalase_2"/>
    <property type="match status" value="1"/>
</dbReference>
<dbReference type="InterPro" id="IPR035680">
    <property type="entry name" value="Clx_II_MBL"/>
</dbReference>
<dbReference type="InterPro" id="IPR050110">
    <property type="entry name" value="Glyoxalase_II_hydrolase"/>
</dbReference>
<dbReference type="InterPro" id="IPR032282">
    <property type="entry name" value="HAGH_C"/>
</dbReference>
<dbReference type="InterPro" id="IPR017782">
    <property type="entry name" value="Hydroxyacylglutathione_Hdrlase"/>
</dbReference>
<dbReference type="InterPro" id="IPR001279">
    <property type="entry name" value="Metallo-B-lactamas"/>
</dbReference>
<dbReference type="InterPro" id="IPR036866">
    <property type="entry name" value="RibonucZ/Hydroxyglut_hydro"/>
</dbReference>
<dbReference type="NCBIfam" id="TIGR03413">
    <property type="entry name" value="GSH_gloB"/>
    <property type="match status" value="1"/>
</dbReference>
<dbReference type="PANTHER" id="PTHR43705">
    <property type="entry name" value="HYDROXYACYLGLUTATHIONE HYDROLASE"/>
    <property type="match status" value="1"/>
</dbReference>
<dbReference type="PANTHER" id="PTHR43705:SF1">
    <property type="entry name" value="HYDROXYACYLGLUTATHIONE HYDROLASE GLOB"/>
    <property type="match status" value="1"/>
</dbReference>
<dbReference type="Pfam" id="PF16123">
    <property type="entry name" value="HAGH_C"/>
    <property type="match status" value="1"/>
</dbReference>
<dbReference type="Pfam" id="PF00753">
    <property type="entry name" value="Lactamase_B"/>
    <property type="match status" value="1"/>
</dbReference>
<dbReference type="PIRSF" id="PIRSF005457">
    <property type="entry name" value="Glx"/>
    <property type="match status" value="1"/>
</dbReference>
<dbReference type="SMART" id="SM00849">
    <property type="entry name" value="Lactamase_B"/>
    <property type="match status" value="1"/>
</dbReference>
<dbReference type="SUPFAM" id="SSF56281">
    <property type="entry name" value="Metallo-hydrolase/oxidoreductase"/>
    <property type="match status" value="1"/>
</dbReference>
<gene>
    <name evidence="1" type="primary">gloB</name>
    <name type="ordered locus">NMA0444</name>
</gene>
<sequence length="250" mass="27821">MKITPVKALTDNYIWMIQHGNHAVCVDPSEPSPVLEFLVRNRLMLAQTWVTHPHPDHEGGAAALWRGYMESPVYGESDIEAATHTVTAGTQFTFGDGQVTVWATPGHTDRHTSYLLETSDGIHVFCGDTLFSAGCGRVFTGTIEQLYDSFQRFNRLPENTLFYPAHEYTAANLRFAAHIEPDNADIQTALKAAERTPTLPVTLAHERRVNPFLRTEIPAVRQRAEALVGKTLNSGLEVFAALRELKNAYC</sequence>
<comment type="function">
    <text evidence="1">Thiolesterase that catalyzes the hydrolysis of S-D-lactoyl-glutathione to form glutathione and D-lactic acid.</text>
</comment>
<comment type="catalytic activity">
    <reaction evidence="1">
        <text>an S-(2-hydroxyacyl)glutathione + H2O = a 2-hydroxy carboxylate + glutathione + H(+)</text>
        <dbReference type="Rhea" id="RHEA:21864"/>
        <dbReference type="ChEBI" id="CHEBI:15377"/>
        <dbReference type="ChEBI" id="CHEBI:15378"/>
        <dbReference type="ChEBI" id="CHEBI:57925"/>
        <dbReference type="ChEBI" id="CHEBI:58896"/>
        <dbReference type="ChEBI" id="CHEBI:71261"/>
        <dbReference type="EC" id="3.1.2.6"/>
    </reaction>
</comment>
<comment type="cofactor">
    <cofactor evidence="1">
        <name>Zn(2+)</name>
        <dbReference type="ChEBI" id="CHEBI:29105"/>
    </cofactor>
    <text evidence="1">Binds 2 Zn(2+) ions per subunit.</text>
</comment>
<comment type="pathway">
    <text evidence="1">Secondary metabolite metabolism; methylglyoxal degradation; (R)-lactate from methylglyoxal: step 2/2.</text>
</comment>
<comment type="subunit">
    <text evidence="1">Monomer.</text>
</comment>
<comment type="similarity">
    <text evidence="1">Belongs to the metallo-beta-lactamase superfamily. Glyoxalase II family.</text>
</comment>
<keyword id="KW-0378">Hydrolase</keyword>
<keyword id="KW-0479">Metal-binding</keyword>
<keyword id="KW-0862">Zinc</keyword>
<proteinExistence type="inferred from homology"/>
<evidence type="ECO:0000255" key="1">
    <source>
        <dbReference type="HAMAP-Rule" id="MF_01374"/>
    </source>
</evidence>
<organism>
    <name type="scientific">Neisseria meningitidis serogroup A / serotype 4A (strain DSM 15465 / Z2491)</name>
    <dbReference type="NCBI Taxonomy" id="122587"/>
    <lineage>
        <taxon>Bacteria</taxon>
        <taxon>Pseudomonadati</taxon>
        <taxon>Pseudomonadota</taxon>
        <taxon>Betaproteobacteria</taxon>
        <taxon>Neisseriales</taxon>
        <taxon>Neisseriaceae</taxon>
        <taxon>Neisseria</taxon>
    </lineage>
</organism>
<accession>A1IPQ8</accession>
<feature type="chain" id="PRO_0000309663" description="Hydroxyacylglutathione hydrolase">
    <location>
        <begin position="1"/>
        <end position="250"/>
    </location>
</feature>
<feature type="binding site" evidence="1">
    <location>
        <position position="52"/>
    </location>
    <ligand>
        <name>Zn(2+)</name>
        <dbReference type="ChEBI" id="CHEBI:29105"/>
        <label>1</label>
    </ligand>
</feature>
<feature type="binding site" evidence="1">
    <location>
        <position position="54"/>
    </location>
    <ligand>
        <name>Zn(2+)</name>
        <dbReference type="ChEBI" id="CHEBI:29105"/>
        <label>1</label>
    </ligand>
</feature>
<feature type="binding site" evidence="1">
    <location>
        <position position="56"/>
    </location>
    <ligand>
        <name>Zn(2+)</name>
        <dbReference type="ChEBI" id="CHEBI:29105"/>
        <label>2</label>
    </ligand>
</feature>
<feature type="binding site" evidence="1">
    <location>
        <position position="57"/>
    </location>
    <ligand>
        <name>Zn(2+)</name>
        <dbReference type="ChEBI" id="CHEBI:29105"/>
        <label>2</label>
    </ligand>
</feature>
<feature type="binding site" evidence="1">
    <location>
        <position position="107"/>
    </location>
    <ligand>
        <name>Zn(2+)</name>
        <dbReference type="ChEBI" id="CHEBI:29105"/>
        <label>1</label>
    </ligand>
</feature>
<feature type="binding site" evidence="1">
    <location>
        <position position="128"/>
    </location>
    <ligand>
        <name>Zn(2+)</name>
        <dbReference type="ChEBI" id="CHEBI:29105"/>
        <label>1</label>
    </ligand>
</feature>
<feature type="binding site" evidence="1">
    <location>
        <position position="128"/>
    </location>
    <ligand>
        <name>Zn(2+)</name>
        <dbReference type="ChEBI" id="CHEBI:29105"/>
        <label>2</label>
    </ligand>
</feature>
<feature type="binding site" evidence="1">
    <location>
        <position position="166"/>
    </location>
    <ligand>
        <name>Zn(2+)</name>
        <dbReference type="ChEBI" id="CHEBI:29105"/>
        <label>2</label>
    </ligand>
</feature>